<reference key="1">
    <citation type="journal article" date="2004" name="Proc. Natl. Acad. Sci. U.S.A.">
        <title>Genome sequence of the deep-sea gamma-proteobacterium Idiomarina loihiensis reveals amino acid fermentation as a source of carbon and energy.</title>
        <authorList>
            <person name="Hou S."/>
            <person name="Saw J.H."/>
            <person name="Lee K.S."/>
            <person name="Freitas T.A."/>
            <person name="Belisle C."/>
            <person name="Kawarabayasi Y."/>
            <person name="Donachie S.P."/>
            <person name="Pikina A."/>
            <person name="Galperin M.Y."/>
            <person name="Koonin E.V."/>
            <person name="Makarova K.S."/>
            <person name="Omelchenko M.V."/>
            <person name="Sorokin A."/>
            <person name="Wolf Y.I."/>
            <person name="Li Q.X."/>
            <person name="Keum Y.S."/>
            <person name="Campbell S."/>
            <person name="Denery J."/>
            <person name="Aizawa S."/>
            <person name="Shibata S."/>
            <person name="Malahoff A."/>
            <person name="Alam M."/>
        </authorList>
    </citation>
    <scope>NUCLEOTIDE SEQUENCE [LARGE SCALE GENOMIC DNA]</scope>
    <source>
        <strain>ATCC BAA-735 / DSM 15497 / L2-TR</strain>
    </source>
</reference>
<protein>
    <recommendedName>
        <fullName evidence="1">Protoheme IX farnesyltransferase</fullName>
        <ecNumber evidence="1">2.5.1.141</ecNumber>
    </recommendedName>
    <alternativeName>
        <fullName evidence="1">Heme B farnesyltransferase</fullName>
    </alternativeName>
    <alternativeName>
        <fullName evidence="1">Heme O synthase</fullName>
    </alternativeName>
</protein>
<feature type="chain" id="PRO_0000326903" description="Protoheme IX farnesyltransferase">
    <location>
        <begin position="1"/>
        <end position="298"/>
    </location>
</feature>
<feature type="transmembrane region" description="Helical" evidence="1">
    <location>
        <begin position="28"/>
        <end position="48"/>
    </location>
</feature>
<feature type="transmembrane region" description="Helical" evidence="1">
    <location>
        <begin position="50"/>
        <end position="70"/>
    </location>
</feature>
<feature type="transmembrane region" description="Helical" evidence="1">
    <location>
        <begin position="95"/>
        <end position="117"/>
    </location>
</feature>
<feature type="transmembrane region" description="Helical" evidence="1">
    <location>
        <begin position="121"/>
        <end position="138"/>
    </location>
</feature>
<feature type="transmembrane region" description="Helical" evidence="1">
    <location>
        <begin position="149"/>
        <end position="169"/>
    </location>
</feature>
<feature type="transmembrane region" description="Helical" evidence="1">
    <location>
        <begin position="176"/>
        <end position="196"/>
    </location>
</feature>
<feature type="transmembrane region" description="Helical" evidence="1">
    <location>
        <begin position="222"/>
        <end position="242"/>
    </location>
</feature>
<feature type="transmembrane region" description="Helical" evidence="1">
    <location>
        <begin position="243"/>
        <end position="263"/>
    </location>
</feature>
<feature type="transmembrane region" description="Helical" evidence="1">
    <location>
        <begin position="274"/>
        <end position="294"/>
    </location>
</feature>
<organism>
    <name type="scientific">Idiomarina loihiensis (strain ATCC BAA-735 / DSM 15497 / L2-TR)</name>
    <dbReference type="NCBI Taxonomy" id="283942"/>
    <lineage>
        <taxon>Bacteria</taxon>
        <taxon>Pseudomonadati</taxon>
        <taxon>Pseudomonadota</taxon>
        <taxon>Gammaproteobacteria</taxon>
        <taxon>Alteromonadales</taxon>
        <taxon>Idiomarinaceae</taxon>
        <taxon>Idiomarina</taxon>
    </lineage>
</organism>
<comment type="function">
    <text evidence="1">Converts heme B (protoheme IX) to heme O by substitution of the vinyl group on carbon 2 of heme B porphyrin ring with a hydroxyethyl farnesyl side group.</text>
</comment>
<comment type="catalytic activity">
    <reaction evidence="1">
        <text>heme b + (2E,6E)-farnesyl diphosphate + H2O = Fe(II)-heme o + diphosphate</text>
        <dbReference type="Rhea" id="RHEA:28070"/>
        <dbReference type="ChEBI" id="CHEBI:15377"/>
        <dbReference type="ChEBI" id="CHEBI:33019"/>
        <dbReference type="ChEBI" id="CHEBI:60344"/>
        <dbReference type="ChEBI" id="CHEBI:60530"/>
        <dbReference type="ChEBI" id="CHEBI:175763"/>
        <dbReference type="EC" id="2.5.1.141"/>
    </reaction>
</comment>
<comment type="pathway">
    <text evidence="1">Porphyrin-containing compound metabolism; heme O biosynthesis; heme O from protoheme: step 1/1.</text>
</comment>
<comment type="subcellular location">
    <subcellularLocation>
        <location evidence="1">Cell inner membrane</location>
        <topology evidence="1">Multi-pass membrane protein</topology>
    </subcellularLocation>
</comment>
<comment type="miscellaneous">
    <text evidence="1">Carbon 2 of the heme B porphyrin ring is defined according to the Fischer nomenclature.</text>
</comment>
<comment type="similarity">
    <text evidence="1">Belongs to the UbiA prenyltransferase family. Protoheme IX farnesyltransferase subfamily.</text>
</comment>
<evidence type="ECO:0000255" key="1">
    <source>
        <dbReference type="HAMAP-Rule" id="MF_00154"/>
    </source>
</evidence>
<keyword id="KW-0997">Cell inner membrane</keyword>
<keyword id="KW-1003">Cell membrane</keyword>
<keyword id="KW-0350">Heme biosynthesis</keyword>
<keyword id="KW-0472">Membrane</keyword>
<keyword id="KW-1185">Reference proteome</keyword>
<keyword id="KW-0808">Transferase</keyword>
<keyword id="KW-0812">Transmembrane</keyword>
<keyword id="KW-1133">Transmembrane helix</keyword>
<accession>Q5R0Y6</accession>
<proteinExistence type="inferred from homology"/>
<dbReference type="EC" id="2.5.1.141" evidence="1"/>
<dbReference type="EMBL" id="AE017340">
    <property type="protein sequence ID" value="AAV81096.1"/>
    <property type="molecule type" value="Genomic_DNA"/>
</dbReference>
<dbReference type="RefSeq" id="WP_011233515.1">
    <property type="nucleotide sequence ID" value="NC_006512.1"/>
</dbReference>
<dbReference type="SMR" id="Q5R0Y6"/>
<dbReference type="STRING" id="283942.IL0253"/>
<dbReference type="GeneID" id="41335399"/>
<dbReference type="KEGG" id="ilo:IL0253"/>
<dbReference type="eggNOG" id="COG0109">
    <property type="taxonomic scope" value="Bacteria"/>
</dbReference>
<dbReference type="HOGENOM" id="CLU_029631_0_2_6"/>
<dbReference type="OrthoDB" id="9814417at2"/>
<dbReference type="UniPathway" id="UPA00834">
    <property type="reaction ID" value="UER00712"/>
</dbReference>
<dbReference type="Proteomes" id="UP000001171">
    <property type="component" value="Chromosome"/>
</dbReference>
<dbReference type="GO" id="GO:0005886">
    <property type="term" value="C:plasma membrane"/>
    <property type="evidence" value="ECO:0007669"/>
    <property type="project" value="UniProtKB-SubCell"/>
</dbReference>
<dbReference type="GO" id="GO:0008495">
    <property type="term" value="F:protoheme IX farnesyltransferase activity"/>
    <property type="evidence" value="ECO:0007669"/>
    <property type="project" value="UniProtKB-UniRule"/>
</dbReference>
<dbReference type="GO" id="GO:0048034">
    <property type="term" value="P:heme O biosynthetic process"/>
    <property type="evidence" value="ECO:0007669"/>
    <property type="project" value="UniProtKB-UniRule"/>
</dbReference>
<dbReference type="CDD" id="cd13957">
    <property type="entry name" value="PT_UbiA_Cox10"/>
    <property type="match status" value="1"/>
</dbReference>
<dbReference type="FunFam" id="1.10.357.140:FF:000001">
    <property type="entry name" value="Protoheme IX farnesyltransferase"/>
    <property type="match status" value="1"/>
</dbReference>
<dbReference type="Gene3D" id="1.10.357.140">
    <property type="entry name" value="UbiA prenyltransferase"/>
    <property type="match status" value="1"/>
</dbReference>
<dbReference type="HAMAP" id="MF_00154">
    <property type="entry name" value="CyoE_CtaB"/>
    <property type="match status" value="1"/>
</dbReference>
<dbReference type="InterPro" id="IPR006369">
    <property type="entry name" value="Protohaem_IX_farnesylTrfase"/>
</dbReference>
<dbReference type="InterPro" id="IPR000537">
    <property type="entry name" value="UbiA_prenyltransferase"/>
</dbReference>
<dbReference type="InterPro" id="IPR030470">
    <property type="entry name" value="UbiA_prenylTrfase_CS"/>
</dbReference>
<dbReference type="InterPro" id="IPR044878">
    <property type="entry name" value="UbiA_sf"/>
</dbReference>
<dbReference type="NCBIfam" id="TIGR01473">
    <property type="entry name" value="cyoE_ctaB"/>
    <property type="match status" value="1"/>
</dbReference>
<dbReference type="NCBIfam" id="NF003349">
    <property type="entry name" value="PRK04375.1-2"/>
    <property type="match status" value="1"/>
</dbReference>
<dbReference type="PANTHER" id="PTHR43448:SF7">
    <property type="entry name" value="4-HYDROXYBENZOATE SOLANESYLTRANSFERASE"/>
    <property type="match status" value="1"/>
</dbReference>
<dbReference type="PANTHER" id="PTHR43448">
    <property type="entry name" value="PROTOHEME IX FARNESYLTRANSFERASE, MITOCHONDRIAL"/>
    <property type="match status" value="1"/>
</dbReference>
<dbReference type="Pfam" id="PF01040">
    <property type="entry name" value="UbiA"/>
    <property type="match status" value="1"/>
</dbReference>
<dbReference type="PROSITE" id="PS00943">
    <property type="entry name" value="UBIA"/>
    <property type="match status" value="1"/>
</dbReference>
<name>CYOE_IDILO</name>
<sequence length="298" mass="32804">MQSVATNNITKTRNAHWRDYLELTKPRVVALLLLTAVVGMCLATEELVSLKVLVPALTGIGLMSAAAAAINHLVDRHIDAKMARTLRRPLPQGNLSPAKVTTFAASIGVIGFVTLYAWVNPLTAWLTFASMVGYAVVYTMFLKRATPQNIVIGGLAGAAPPLLGWTSVTNEINAPAVLLVMIIFTWTPPHFWALAVHRAKDYARAKVPMLPVTHGIEFTKTCIFLYTVLLTVVCLMPFLIGMTGMIYLVGVSVLNAIFLAYAWKLKYSPSKKTAFNMFAFSIWHLMLLFVILLVDHYV</sequence>
<gene>
    <name evidence="1" type="primary">cyoE</name>
    <name type="ordered locus">IL0253</name>
</gene>